<reference key="1">
    <citation type="journal article" date="2005" name="Biochim. Biophys. Acta">
        <title>NADPH oxidase homologs are required for normal cell differentiation and morphogenesis in Dictyostelium discoideum.</title>
        <authorList>
            <person name="Lardy B."/>
            <person name="Bof M."/>
            <person name="Aubry L."/>
            <person name="Paclet M.H."/>
            <person name="Morel F."/>
            <person name="Satre M."/>
            <person name="Klein G."/>
        </authorList>
    </citation>
    <scope>NUCLEOTIDE SEQUENCE [GENOMIC DNA]</scope>
    <scope>DEVELOPMENTAL STAGE</scope>
    <scope>DISRUPTION PHENOTYPE</scope>
</reference>
<reference key="2">
    <citation type="journal article" date="2005" name="Nature">
        <title>The genome of the social amoeba Dictyostelium discoideum.</title>
        <authorList>
            <person name="Eichinger L."/>
            <person name="Pachebat J.A."/>
            <person name="Gloeckner G."/>
            <person name="Rajandream M.A."/>
            <person name="Sucgang R."/>
            <person name="Berriman M."/>
            <person name="Song J."/>
            <person name="Olsen R."/>
            <person name="Szafranski K."/>
            <person name="Xu Q."/>
            <person name="Tunggal B."/>
            <person name="Kummerfeld S."/>
            <person name="Madera M."/>
            <person name="Konfortov B.A."/>
            <person name="Rivero F."/>
            <person name="Bankier A.T."/>
            <person name="Lehmann R."/>
            <person name="Hamlin N."/>
            <person name="Davies R."/>
            <person name="Gaudet P."/>
            <person name="Fey P."/>
            <person name="Pilcher K."/>
            <person name="Chen G."/>
            <person name="Saunders D."/>
            <person name="Sodergren E.J."/>
            <person name="Davis P."/>
            <person name="Kerhornou A."/>
            <person name="Nie X."/>
            <person name="Hall N."/>
            <person name="Anjard C."/>
            <person name="Hemphill L."/>
            <person name="Bason N."/>
            <person name="Farbrother P."/>
            <person name="Desany B."/>
            <person name="Just E."/>
            <person name="Morio T."/>
            <person name="Rost R."/>
            <person name="Churcher C.M."/>
            <person name="Cooper J."/>
            <person name="Haydock S."/>
            <person name="van Driessche N."/>
            <person name="Cronin A."/>
            <person name="Goodhead I."/>
            <person name="Muzny D.M."/>
            <person name="Mourier T."/>
            <person name="Pain A."/>
            <person name="Lu M."/>
            <person name="Harper D."/>
            <person name="Lindsay R."/>
            <person name="Hauser H."/>
            <person name="James K.D."/>
            <person name="Quiles M."/>
            <person name="Madan Babu M."/>
            <person name="Saito T."/>
            <person name="Buchrieser C."/>
            <person name="Wardroper A."/>
            <person name="Felder M."/>
            <person name="Thangavelu M."/>
            <person name="Johnson D."/>
            <person name="Knights A."/>
            <person name="Loulseged H."/>
            <person name="Mungall K.L."/>
            <person name="Oliver K."/>
            <person name="Price C."/>
            <person name="Quail M.A."/>
            <person name="Urushihara H."/>
            <person name="Hernandez J."/>
            <person name="Rabbinowitsch E."/>
            <person name="Steffen D."/>
            <person name="Sanders M."/>
            <person name="Ma J."/>
            <person name="Kohara Y."/>
            <person name="Sharp S."/>
            <person name="Simmonds M.N."/>
            <person name="Spiegler S."/>
            <person name="Tivey A."/>
            <person name="Sugano S."/>
            <person name="White B."/>
            <person name="Walker D."/>
            <person name="Woodward J.R."/>
            <person name="Winckler T."/>
            <person name="Tanaka Y."/>
            <person name="Shaulsky G."/>
            <person name="Schleicher M."/>
            <person name="Weinstock G.M."/>
            <person name="Rosenthal A."/>
            <person name="Cox E.C."/>
            <person name="Chisholm R.L."/>
            <person name="Gibbs R.A."/>
            <person name="Loomis W.F."/>
            <person name="Platzer M."/>
            <person name="Kay R.R."/>
            <person name="Williams J.G."/>
            <person name="Dear P.H."/>
            <person name="Noegel A.A."/>
            <person name="Barrell B.G."/>
            <person name="Kuspa A."/>
        </authorList>
    </citation>
    <scope>NUCLEOTIDE SEQUENCE [LARGE SCALE GENOMIC DNA]</scope>
    <source>
        <strain>AX4</strain>
    </source>
</reference>
<organism>
    <name type="scientific">Dictyostelium discoideum</name>
    <name type="common">Social amoeba</name>
    <dbReference type="NCBI Taxonomy" id="44689"/>
    <lineage>
        <taxon>Eukaryota</taxon>
        <taxon>Amoebozoa</taxon>
        <taxon>Evosea</taxon>
        <taxon>Eumycetozoa</taxon>
        <taxon>Dictyostelia</taxon>
        <taxon>Dictyosteliales</taxon>
        <taxon>Dictyosteliaceae</taxon>
        <taxon>Dictyostelium</taxon>
    </lineage>
</organism>
<proteinExistence type="evidence at transcript level"/>
<dbReference type="EMBL" id="AY221172">
    <property type="protein sequence ID" value="AAO62420.1"/>
    <property type="molecule type" value="Genomic_DNA"/>
</dbReference>
<dbReference type="EMBL" id="AY224389">
    <property type="protein sequence ID" value="AAO72634.1"/>
    <property type="molecule type" value="mRNA"/>
</dbReference>
<dbReference type="EMBL" id="AAFI02000125">
    <property type="protein sequence ID" value="EAL63008.1"/>
    <property type="molecule type" value="Genomic_DNA"/>
</dbReference>
<dbReference type="RefSeq" id="XP_636535.1">
    <property type="nucleotide sequence ID" value="XM_631443.1"/>
</dbReference>
<dbReference type="SMR" id="Q867T7"/>
<dbReference type="FunCoup" id="Q867T7">
    <property type="interactions" value="590"/>
</dbReference>
<dbReference type="STRING" id="44689.Q867T7"/>
<dbReference type="GlyGen" id="Q867T7">
    <property type="glycosylation" value="1 site"/>
</dbReference>
<dbReference type="PaxDb" id="44689-DDB0191152"/>
<dbReference type="ABCD" id="Q867T7">
    <property type="antibodies" value="6 sequenced antibodies"/>
</dbReference>
<dbReference type="EnsemblProtists" id="EAL63008">
    <property type="protein sequence ID" value="EAL63008"/>
    <property type="gene ID" value="DDB_G0288773"/>
</dbReference>
<dbReference type="GeneID" id="8626820"/>
<dbReference type="KEGG" id="ddi:DDB_G0288773"/>
<dbReference type="dictyBase" id="DDB_G0288773">
    <property type="gene designation" value="ncfA"/>
</dbReference>
<dbReference type="VEuPathDB" id="AmoebaDB:DDB_G0288773"/>
<dbReference type="eggNOG" id="KOG4225">
    <property type="taxonomic scope" value="Eukaryota"/>
</dbReference>
<dbReference type="HOGENOM" id="CLU_452313_0_0_1"/>
<dbReference type="InParanoid" id="Q867T7"/>
<dbReference type="OMA" id="NYNIGVM"/>
<dbReference type="PRO" id="PR:Q867T7"/>
<dbReference type="Proteomes" id="UP000002195">
    <property type="component" value="Chromosome 5"/>
</dbReference>
<dbReference type="GO" id="GO:0005829">
    <property type="term" value="C:cytosol"/>
    <property type="evidence" value="ECO:0000250"/>
    <property type="project" value="dictyBase"/>
</dbReference>
<dbReference type="GO" id="GO:0016176">
    <property type="term" value="F:superoxide-generating NADPH oxidase activator activity"/>
    <property type="evidence" value="ECO:0000250"/>
    <property type="project" value="dictyBase"/>
</dbReference>
<dbReference type="GO" id="GO:0006801">
    <property type="term" value="P:superoxide metabolic process"/>
    <property type="evidence" value="ECO:0000250"/>
    <property type="project" value="dictyBase"/>
</dbReference>
<dbReference type="CDD" id="cd00201">
    <property type="entry name" value="WW"/>
    <property type="match status" value="1"/>
</dbReference>
<dbReference type="Gene3D" id="1.25.40.10">
    <property type="entry name" value="Tetratricopeptide repeat domain"/>
    <property type="match status" value="1"/>
</dbReference>
<dbReference type="InterPro" id="IPR051864">
    <property type="entry name" value="NCF2_NOXA1"/>
</dbReference>
<dbReference type="InterPro" id="IPR053793">
    <property type="entry name" value="PB1-like"/>
</dbReference>
<dbReference type="InterPro" id="IPR011990">
    <property type="entry name" value="TPR-like_helical_dom_sf"/>
</dbReference>
<dbReference type="InterPro" id="IPR019734">
    <property type="entry name" value="TPR_rpt"/>
</dbReference>
<dbReference type="InterPro" id="IPR001202">
    <property type="entry name" value="WW_dom"/>
</dbReference>
<dbReference type="InterPro" id="IPR036020">
    <property type="entry name" value="WW_dom_sf"/>
</dbReference>
<dbReference type="PANTHER" id="PTHR15175">
    <property type="entry name" value="NEUTROPHIL CYTOSOLIC FACTOR 2, NEUTROPHIL NADPH OXIDASE FACTOR 2"/>
    <property type="match status" value="1"/>
</dbReference>
<dbReference type="PANTHER" id="PTHR15175:SF0">
    <property type="entry name" value="SH3 DOMAIN-CONTAINING PROTEIN C23A1.17"/>
    <property type="match status" value="1"/>
</dbReference>
<dbReference type="SMART" id="SM00028">
    <property type="entry name" value="TPR"/>
    <property type="match status" value="2"/>
</dbReference>
<dbReference type="SUPFAM" id="SSF48452">
    <property type="entry name" value="TPR-like"/>
    <property type="match status" value="1"/>
</dbReference>
<dbReference type="SUPFAM" id="SSF51045">
    <property type="entry name" value="WW domain"/>
    <property type="match status" value="1"/>
</dbReference>
<dbReference type="PROSITE" id="PS51745">
    <property type="entry name" value="PB1"/>
    <property type="match status" value="1"/>
</dbReference>
<dbReference type="PROSITE" id="PS50005">
    <property type="entry name" value="TPR"/>
    <property type="match status" value="2"/>
</dbReference>
<dbReference type="PROSITE" id="PS50293">
    <property type="entry name" value="TPR_REGION"/>
    <property type="match status" value="1"/>
</dbReference>
<dbReference type="PROSITE" id="PS50020">
    <property type="entry name" value="WW_DOMAIN_2"/>
    <property type="match status" value="1"/>
</dbReference>
<accession>Q867T7</accession>
<accession>Q54IE2</accession>
<evidence type="ECO:0000250" key="1"/>
<evidence type="ECO:0000255" key="2">
    <source>
        <dbReference type="PROSITE-ProRule" id="PRU00224"/>
    </source>
</evidence>
<evidence type="ECO:0000255" key="3">
    <source>
        <dbReference type="PROSITE-ProRule" id="PRU01081"/>
    </source>
</evidence>
<evidence type="ECO:0000256" key="4">
    <source>
        <dbReference type="SAM" id="MobiDB-lite"/>
    </source>
</evidence>
<evidence type="ECO:0000269" key="5">
    <source>
    </source>
</evidence>
<keyword id="KW-1185">Reference proteome</keyword>
<keyword id="KW-0677">Repeat</keyword>
<keyword id="KW-0802">TPR repeat</keyword>
<feature type="chain" id="PRO_0000361531" description="NADPH oxidase activator">
    <location>
        <begin position="1"/>
        <end position="604"/>
    </location>
</feature>
<feature type="repeat" description="TPR 1">
    <location>
        <begin position="36"/>
        <end position="69"/>
    </location>
</feature>
<feature type="repeat" description="TPR 2">
    <location>
        <begin position="71"/>
        <end position="103"/>
    </location>
</feature>
<feature type="domain" description="PB1" evidence="3">
    <location>
        <begin position="309"/>
        <end position="384"/>
    </location>
</feature>
<feature type="domain" description="WW" evidence="2">
    <location>
        <begin position="573"/>
        <end position="604"/>
    </location>
</feature>
<feature type="region of interest" description="Disordered" evidence="4">
    <location>
        <begin position="180"/>
        <end position="298"/>
    </location>
</feature>
<feature type="region of interest" description="Disordered" evidence="4">
    <location>
        <begin position="383"/>
        <end position="581"/>
    </location>
</feature>
<feature type="compositionally biased region" description="Low complexity" evidence="4">
    <location>
        <begin position="194"/>
        <end position="215"/>
    </location>
</feature>
<feature type="compositionally biased region" description="Low complexity" evidence="4">
    <location>
        <begin position="225"/>
        <end position="243"/>
    </location>
</feature>
<feature type="compositionally biased region" description="Pro residues" evidence="4">
    <location>
        <begin position="244"/>
        <end position="260"/>
    </location>
</feature>
<feature type="compositionally biased region" description="Low complexity" evidence="4">
    <location>
        <begin position="261"/>
        <end position="284"/>
    </location>
</feature>
<feature type="compositionally biased region" description="Low complexity" evidence="4">
    <location>
        <begin position="396"/>
        <end position="424"/>
    </location>
</feature>
<feature type="compositionally biased region" description="Low complexity" evidence="4">
    <location>
        <begin position="435"/>
        <end position="453"/>
    </location>
</feature>
<feature type="compositionally biased region" description="Low complexity" evidence="4">
    <location>
        <begin position="467"/>
        <end position="483"/>
    </location>
</feature>
<feature type="compositionally biased region" description="Polar residues" evidence="4">
    <location>
        <begin position="502"/>
        <end position="528"/>
    </location>
</feature>
<feature type="compositionally biased region" description="Low complexity" evidence="4">
    <location>
        <begin position="529"/>
        <end position="570"/>
    </location>
</feature>
<comment type="function">
    <text evidence="1">May function as an activator of NOX1, a superoxide-producing NADPH oxidase.</text>
</comment>
<comment type="developmental stage">
    <text evidence="5">Highly expressed during vegetative stage. Expression decreases during development and is very low from 12 hours (late aggregation stage).</text>
</comment>
<comment type="disruption phenotype">
    <text evidence="5">No visible phenotype.</text>
</comment>
<comment type="miscellaneous">
    <text>Although it only shares low sequence similarity with members of the NCF2/NOXA1 family, it may ensure the same function as NCF2/p67-phox.</text>
</comment>
<protein>
    <recommendedName>
        <fullName>NADPH oxidase activator</fullName>
        <shortName>NOX activator</shortName>
    </recommendedName>
    <alternativeName>
        <fullName>p67-phox-like factor</fullName>
    </alternativeName>
</protein>
<gene>
    <name type="primary">ncfA</name>
    <name type="ORF">DDB_G0288773</name>
</gene>
<name>NCFA_DICDI</name>
<sequence length="604" mass="65254">MLKQTIKKWNQSIERYESGNVGEALTILTSIEQSTSKINYNIGVMYIKSNNFRNAIEYFNRSVEQDKYLASSYYMRAIAHHMNGELNHAIVDYDETISKLRGHEYIDYKQLGLDHKLLLAEVLFNKALALGRAGSSVALQATQCFSQPSDSQEFKNQCKKIQDGSQLNFSTRPIPLSLLFKPPKVSDAPQKQRSATTSSIQSSSPSTPMSSSPPSYILKGPSSPPSSSSPSSSSPSLSSSSSPKLPPTPKPSFGSSPPPSSSSSSSSSSSSSSSSISPLTNKTLPPKPPPLPSKKLPSRPISCVIQDVKITLKVFYKDRRLIQIPVPCNLSTFIQKIELKFEITISDKFSLSFQLDGEENEINSQVQLDKMICMEINEINVKDIIPSPSPSPSPSPDKTNNSTSSYSSSSSSSSSSSSSSSSSSYDNKPKSSFIPKTTTRPILPPTTTTTTSTSNNFNRNATLPKKFGSTPSSPSFSSPSSSSSGGGGGPPIPTRGSPSISLLKQQNQTQSINIPPKVPTSSRPKMTQSHSPPSSSPLSSYSTSFQSVSSPSLSSSYNGSTSSYGGFSSSRPPPTPYPYQVLYTDSNEKYYLNTETNETFWELP</sequence>